<feature type="initiator methionine" description="Removed" evidence="1">
    <location>
        <position position="1"/>
    </location>
</feature>
<feature type="chain" id="PRO_0000194584" description="Regulatory protein SoxS">
    <location>
        <begin position="2"/>
        <end position="107"/>
    </location>
</feature>
<feature type="domain" description="HTH araC/xylS-type" evidence="2">
    <location>
        <begin position="8"/>
        <end position="106"/>
    </location>
</feature>
<feature type="DNA-binding region" description="H-T-H motif" evidence="2">
    <location>
        <begin position="25"/>
        <end position="46"/>
    </location>
</feature>
<feature type="DNA-binding region" description="H-T-H motif" evidence="2">
    <location>
        <begin position="73"/>
        <end position="96"/>
    </location>
</feature>
<sequence length="107" mass="12911">MSHQKIIQDLIAWIDEHIDQPLNIDVVAKKSGYSKWYLQRMFRTVTHQTLGDYIRQRRLLLAAVELRTTERPIFDIAMDLGYVSQQTFSRVFRRQFDRTPSDYRHRL</sequence>
<reference key="1">
    <citation type="journal article" date="2001" name="Nature">
        <title>Genome sequence of enterohaemorrhagic Escherichia coli O157:H7.</title>
        <authorList>
            <person name="Perna N.T."/>
            <person name="Plunkett G. III"/>
            <person name="Burland V."/>
            <person name="Mau B."/>
            <person name="Glasner J.D."/>
            <person name="Rose D.J."/>
            <person name="Mayhew G.F."/>
            <person name="Evans P.S."/>
            <person name="Gregor J."/>
            <person name="Kirkpatrick H.A."/>
            <person name="Posfai G."/>
            <person name="Hackett J."/>
            <person name="Klink S."/>
            <person name="Boutin A."/>
            <person name="Shao Y."/>
            <person name="Miller L."/>
            <person name="Grotbeck E.J."/>
            <person name="Davis N.W."/>
            <person name="Lim A."/>
            <person name="Dimalanta E.T."/>
            <person name="Potamousis K."/>
            <person name="Apodaca J."/>
            <person name="Anantharaman T.S."/>
            <person name="Lin J."/>
            <person name="Yen G."/>
            <person name="Schwartz D.C."/>
            <person name="Welch R.A."/>
            <person name="Blattner F.R."/>
        </authorList>
    </citation>
    <scope>NUCLEOTIDE SEQUENCE [LARGE SCALE GENOMIC DNA]</scope>
    <source>
        <strain>O157:H7 / EDL933 / ATCC 700927 / EHEC</strain>
    </source>
</reference>
<reference key="2">
    <citation type="journal article" date="2001" name="DNA Res.">
        <title>Complete genome sequence of enterohemorrhagic Escherichia coli O157:H7 and genomic comparison with a laboratory strain K-12.</title>
        <authorList>
            <person name="Hayashi T."/>
            <person name="Makino K."/>
            <person name="Ohnishi M."/>
            <person name="Kurokawa K."/>
            <person name="Ishii K."/>
            <person name="Yokoyama K."/>
            <person name="Han C.-G."/>
            <person name="Ohtsubo E."/>
            <person name="Nakayama K."/>
            <person name="Murata T."/>
            <person name="Tanaka M."/>
            <person name="Tobe T."/>
            <person name="Iida T."/>
            <person name="Takami H."/>
            <person name="Honda T."/>
            <person name="Sasakawa C."/>
            <person name="Ogasawara N."/>
            <person name="Yasunaga T."/>
            <person name="Kuhara S."/>
            <person name="Shiba T."/>
            <person name="Hattori M."/>
            <person name="Shinagawa H."/>
        </authorList>
    </citation>
    <scope>NUCLEOTIDE SEQUENCE [LARGE SCALE GENOMIC DNA]</scope>
    <source>
        <strain>O157:H7 / Sakai / RIMD 0509952 / EHEC</strain>
    </source>
</reference>
<name>SOXS_ECO57</name>
<gene>
    <name type="primary">soxS</name>
    <name type="ordered locus">Z5661</name>
    <name type="ordered locus">ECs5044</name>
</gene>
<evidence type="ECO:0000250" key="1"/>
<evidence type="ECO:0000255" key="2">
    <source>
        <dbReference type="PROSITE-ProRule" id="PRU00593"/>
    </source>
</evidence>
<evidence type="ECO:0000305" key="3"/>
<organism>
    <name type="scientific">Escherichia coli O157:H7</name>
    <dbReference type="NCBI Taxonomy" id="83334"/>
    <lineage>
        <taxon>Bacteria</taxon>
        <taxon>Pseudomonadati</taxon>
        <taxon>Pseudomonadota</taxon>
        <taxon>Gammaproteobacteria</taxon>
        <taxon>Enterobacterales</taxon>
        <taxon>Enterobacteriaceae</taxon>
        <taxon>Escherichia</taxon>
    </lineage>
</organism>
<protein>
    <recommendedName>
        <fullName>Regulatory protein SoxS</fullName>
    </recommendedName>
</protein>
<keyword id="KW-0010">Activator</keyword>
<keyword id="KW-0963">Cytoplasm</keyword>
<keyword id="KW-0238">DNA-binding</keyword>
<keyword id="KW-1185">Reference proteome</keyword>
<keyword id="KW-0804">Transcription</keyword>
<keyword id="KW-0805">Transcription regulation</keyword>
<comment type="function">
    <text evidence="1">Transcriptional activator of the superoxide response regulon of E.coli that includes at least 10 genes such as sodA, nfo, zwf and micF. Binds the DNA sequence 5'-GCACN(7)CAA-3'. It also facilitates the subsequent binding of RNA polymerase to the micF and the nfo promoters (By similarity).</text>
</comment>
<comment type="subcellular location">
    <subcellularLocation>
        <location evidence="3">Cytoplasm</location>
    </subcellularLocation>
</comment>
<proteinExistence type="inferred from homology"/>
<dbReference type="EMBL" id="AE005174">
    <property type="protein sequence ID" value="AAG59260.1"/>
    <property type="molecule type" value="Genomic_DNA"/>
</dbReference>
<dbReference type="EMBL" id="BA000007">
    <property type="protein sequence ID" value="BAB38467.1"/>
    <property type="molecule type" value="Genomic_DNA"/>
</dbReference>
<dbReference type="PIR" id="D91259">
    <property type="entry name" value="D91259"/>
</dbReference>
<dbReference type="PIR" id="H86099">
    <property type="entry name" value="H86099"/>
</dbReference>
<dbReference type="RefSeq" id="NP_313071.1">
    <property type="nucleotide sequence ID" value="NC_002695.1"/>
</dbReference>
<dbReference type="RefSeq" id="WP_000019358.1">
    <property type="nucleotide sequence ID" value="NZ_VOAI01000008.1"/>
</dbReference>
<dbReference type="SMR" id="P0A9E4"/>
<dbReference type="STRING" id="155864.Z5661"/>
<dbReference type="GeneID" id="914293"/>
<dbReference type="GeneID" id="93777769"/>
<dbReference type="KEGG" id="ece:Z5661"/>
<dbReference type="KEGG" id="ecs:ECs_5044"/>
<dbReference type="PATRIC" id="fig|386585.9.peg.5267"/>
<dbReference type="eggNOG" id="COG2207">
    <property type="taxonomic scope" value="Bacteria"/>
</dbReference>
<dbReference type="HOGENOM" id="CLU_000445_81_14_6"/>
<dbReference type="OMA" id="QTQRPVF"/>
<dbReference type="Proteomes" id="UP000000558">
    <property type="component" value="Chromosome"/>
</dbReference>
<dbReference type="Proteomes" id="UP000002519">
    <property type="component" value="Chromosome"/>
</dbReference>
<dbReference type="GO" id="GO:0005737">
    <property type="term" value="C:cytoplasm"/>
    <property type="evidence" value="ECO:0007669"/>
    <property type="project" value="UniProtKB-SubCell"/>
</dbReference>
<dbReference type="GO" id="GO:0003700">
    <property type="term" value="F:DNA-binding transcription factor activity"/>
    <property type="evidence" value="ECO:0007669"/>
    <property type="project" value="InterPro"/>
</dbReference>
<dbReference type="GO" id="GO:0043565">
    <property type="term" value="F:sequence-specific DNA binding"/>
    <property type="evidence" value="ECO:0007669"/>
    <property type="project" value="InterPro"/>
</dbReference>
<dbReference type="FunFam" id="1.10.10.60:FF:000030">
    <property type="entry name" value="DNA-binding transcriptional regulator SoxS"/>
    <property type="match status" value="1"/>
</dbReference>
<dbReference type="Gene3D" id="1.10.10.60">
    <property type="entry name" value="Homeodomain-like"/>
    <property type="match status" value="2"/>
</dbReference>
<dbReference type="InterPro" id="IPR009057">
    <property type="entry name" value="Homeodomain-like_sf"/>
</dbReference>
<dbReference type="InterPro" id="IPR018060">
    <property type="entry name" value="HTH_AraC"/>
</dbReference>
<dbReference type="InterPro" id="IPR018062">
    <property type="entry name" value="HTH_AraC-typ_CS"/>
</dbReference>
<dbReference type="InterPro" id="IPR050959">
    <property type="entry name" value="MarA-like"/>
</dbReference>
<dbReference type="InterPro" id="IPR020449">
    <property type="entry name" value="Tscrpt_reg_AraC-type_HTH"/>
</dbReference>
<dbReference type="NCBIfam" id="NF007584">
    <property type="entry name" value="PRK10219.1"/>
    <property type="match status" value="1"/>
</dbReference>
<dbReference type="PANTHER" id="PTHR47504:SF2">
    <property type="entry name" value="REGULATORY PROTEIN SOXS"/>
    <property type="match status" value="1"/>
</dbReference>
<dbReference type="PANTHER" id="PTHR47504">
    <property type="entry name" value="RIGHT ORIGIN-BINDING PROTEIN"/>
    <property type="match status" value="1"/>
</dbReference>
<dbReference type="Pfam" id="PF12833">
    <property type="entry name" value="HTH_18"/>
    <property type="match status" value="1"/>
</dbReference>
<dbReference type="PRINTS" id="PR00032">
    <property type="entry name" value="HTHARAC"/>
</dbReference>
<dbReference type="SMART" id="SM00342">
    <property type="entry name" value="HTH_ARAC"/>
    <property type="match status" value="1"/>
</dbReference>
<dbReference type="SUPFAM" id="SSF46689">
    <property type="entry name" value="Homeodomain-like"/>
    <property type="match status" value="2"/>
</dbReference>
<dbReference type="PROSITE" id="PS00041">
    <property type="entry name" value="HTH_ARAC_FAMILY_1"/>
    <property type="match status" value="1"/>
</dbReference>
<dbReference type="PROSITE" id="PS01124">
    <property type="entry name" value="HTH_ARAC_FAMILY_2"/>
    <property type="match status" value="1"/>
</dbReference>
<accession>P0A9E4</accession>
<accession>P22539</accession>